<dbReference type="EMBL" id="CP000100">
    <property type="protein sequence ID" value="ABB58583.1"/>
    <property type="molecule type" value="Genomic_DNA"/>
</dbReference>
<dbReference type="RefSeq" id="WP_011243867.1">
    <property type="nucleotide sequence ID" value="NZ_JACJTX010000001.1"/>
</dbReference>
<dbReference type="SMR" id="Q31K36"/>
<dbReference type="STRING" id="1140.Synpcc7942_2553"/>
<dbReference type="PaxDb" id="1140-Synpcc7942_2553"/>
<dbReference type="GeneID" id="72431447"/>
<dbReference type="KEGG" id="syf:Synpcc7942_2553"/>
<dbReference type="eggNOG" id="COG0375">
    <property type="taxonomic scope" value="Bacteria"/>
</dbReference>
<dbReference type="HOGENOM" id="CLU_126929_4_1_3"/>
<dbReference type="OrthoDB" id="9800361at2"/>
<dbReference type="BioCyc" id="SYNEL:SYNPCC7942_2553-MONOMER"/>
<dbReference type="Proteomes" id="UP000889800">
    <property type="component" value="Chromosome"/>
</dbReference>
<dbReference type="GO" id="GO:0016151">
    <property type="term" value="F:nickel cation binding"/>
    <property type="evidence" value="ECO:0007669"/>
    <property type="project" value="UniProtKB-UniRule"/>
</dbReference>
<dbReference type="GO" id="GO:0008270">
    <property type="term" value="F:zinc ion binding"/>
    <property type="evidence" value="ECO:0007669"/>
    <property type="project" value="UniProtKB-UniRule"/>
</dbReference>
<dbReference type="GO" id="GO:0051604">
    <property type="term" value="P:protein maturation"/>
    <property type="evidence" value="ECO:0007669"/>
    <property type="project" value="InterPro"/>
</dbReference>
<dbReference type="GO" id="GO:0036211">
    <property type="term" value="P:protein modification process"/>
    <property type="evidence" value="ECO:0007669"/>
    <property type="project" value="UniProtKB-UniRule"/>
</dbReference>
<dbReference type="Gene3D" id="3.30.2320.80">
    <property type="match status" value="1"/>
</dbReference>
<dbReference type="HAMAP" id="MF_00213">
    <property type="entry name" value="HypA_HybF"/>
    <property type="match status" value="1"/>
</dbReference>
<dbReference type="InterPro" id="IPR020538">
    <property type="entry name" value="Hydgase_Ni_incorp_HypA/HybF_CS"/>
</dbReference>
<dbReference type="InterPro" id="IPR000688">
    <property type="entry name" value="HypA/HybF"/>
</dbReference>
<dbReference type="NCBIfam" id="TIGR00100">
    <property type="entry name" value="hypA"/>
    <property type="match status" value="1"/>
</dbReference>
<dbReference type="PANTHER" id="PTHR34535">
    <property type="entry name" value="HYDROGENASE MATURATION FACTOR HYPA"/>
    <property type="match status" value="1"/>
</dbReference>
<dbReference type="PANTHER" id="PTHR34535:SF3">
    <property type="entry name" value="HYDROGENASE MATURATION FACTOR HYPA"/>
    <property type="match status" value="1"/>
</dbReference>
<dbReference type="Pfam" id="PF01155">
    <property type="entry name" value="HypA"/>
    <property type="match status" value="1"/>
</dbReference>
<dbReference type="PIRSF" id="PIRSF004761">
    <property type="entry name" value="Hydrgn_mat_HypA"/>
    <property type="match status" value="1"/>
</dbReference>
<dbReference type="PROSITE" id="PS01249">
    <property type="entry name" value="HYPA"/>
    <property type="match status" value="1"/>
</dbReference>
<organism>
    <name type="scientific">Synechococcus elongatus (strain ATCC 33912 / PCC 7942 / FACHB-805)</name>
    <name type="common">Anacystis nidulans R2</name>
    <dbReference type="NCBI Taxonomy" id="1140"/>
    <lineage>
        <taxon>Bacteria</taxon>
        <taxon>Bacillati</taxon>
        <taxon>Cyanobacteriota</taxon>
        <taxon>Cyanophyceae</taxon>
        <taxon>Synechococcales</taxon>
        <taxon>Synechococcaceae</taxon>
        <taxon>Synechococcus</taxon>
    </lineage>
</organism>
<proteinExistence type="inferred from homology"/>
<comment type="function">
    <text evidence="1">Involved in the maturation of [NiFe] hydrogenases. Required for nickel insertion into the metal center of the hydrogenase.</text>
</comment>
<comment type="similarity">
    <text evidence="1">Belongs to the HypA/HybF family.</text>
</comment>
<keyword id="KW-0479">Metal-binding</keyword>
<keyword id="KW-0533">Nickel</keyword>
<keyword id="KW-1185">Reference proteome</keyword>
<keyword id="KW-0862">Zinc</keyword>
<reference key="1">
    <citation type="submission" date="2005-08" db="EMBL/GenBank/DDBJ databases">
        <title>Complete sequence of chromosome 1 of Synechococcus elongatus PCC 7942.</title>
        <authorList>
            <consortium name="US DOE Joint Genome Institute"/>
            <person name="Copeland A."/>
            <person name="Lucas S."/>
            <person name="Lapidus A."/>
            <person name="Barry K."/>
            <person name="Detter J.C."/>
            <person name="Glavina T."/>
            <person name="Hammon N."/>
            <person name="Israni S."/>
            <person name="Pitluck S."/>
            <person name="Schmutz J."/>
            <person name="Larimer F."/>
            <person name="Land M."/>
            <person name="Kyrpides N."/>
            <person name="Lykidis A."/>
            <person name="Golden S."/>
            <person name="Richardson P."/>
        </authorList>
    </citation>
    <scope>NUCLEOTIDE SEQUENCE [LARGE SCALE GENOMIC DNA]</scope>
    <source>
        <strain>ATCC 33912 / PCC 7942 / FACHB-805</strain>
    </source>
</reference>
<name>HYPA_SYNE7</name>
<feature type="chain" id="PRO_1000023862" description="Hydrogenase maturation factor HypA">
    <location>
        <begin position="1"/>
        <end position="112"/>
    </location>
</feature>
<feature type="binding site" evidence="1">
    <location>
        <position position="2"/>
    </location>
    <ligand>
        <name>Ni(2+)</name>
        <dbReference type="ChEBI" id="CHEBI:49786"/>
    </ligand>
</feature>
<feature type="binding site" evidence="1">
    <location>
        <position position="73"/>
    </location>
    <ligand>
        <name>Zn(2+)</name>
        <dbReference type="ChEBI" id="CHEBI:29105"/>
    </ligand>
</feature>
<feature type="binding site" evidence="1">
    <location>
        <position position="76"/>
    </location>
    <ligand>
        <name>Zn(2+)</name>
        <dbReference type="ChEBI" id="CHEBI:29105"/>
    </ligand>
</feature>
<feature type="binding site" evidence="1">
    <location>
        <position position="88"/>
    </location>
    <ligand>
        <name>Zn(2+)</name>
        <dbReference type="ChEBI" id="CHEBI:29105"/>
    </ligand>
</feature>
<feature type="binding site" evidence="1">
    <location>
        <position position="91"/>
    </location>
    <ligand>
        <name>Zn(2+)</name>
        <dbReference type="ChEBI" id="CHEBI:29105"/>
    </ligand>
</feature>
<accession>Q31K36</accession>
<evidence type="ECO:0000255" key="1">
    <source>
        <dbReference type="HAMAP-Rule" id="MF_00213"/>
    </source>
</evidence>
<sequence>MHELSLATALVETALWQAVQAEAQQIVSLKLRLGTWAGVDAEALRFAFSLVQQDTIAASAQLVIESVPAQFRCQTCGQQTPPPLLAACSHCGSDRWQLQQGRELQLQSMEVV</sequence>
<gene>
    <name evidence="1" type="primary">hypA</name>
    <name type="ordered locus">Synpcc7942_2553</name>
</gene>
<protein>
    <recommendedName>
        <fullName evidence="1">Hydrogenase maturation factor HypA</fullName>
    </recommendedName>
</protein>